<dbReference type="EMBL" id="X58357">
    <property type="protein sequence ID" value="CAA41254.1"/>
    <property type="molecule type" value="mRNA"/>
</dbReference>
<dbReference type="PIR" id="S17792">
    <property type="entry name" value="S17792"/>
</dbReference>
<dbReference type="RefSeq" id="XP_050416077.1">
    <property type="nucleotide sequence ID" value="XM_050560120.2"/>
</dbReference>
<dbReference type="SMR" id="P24861"/>
<dbReference type="EnsemblMetazoa" id="ENSPVUT00005011312">
    <property type="protein sequence ID" value="ENSPVUP00005008898"/>
    <property type="gene ID" value="ENSPVUG00005007507"/>
</dbReference>
<dbReference type="GeneID" id="126829938"/>
<dbReference type="OMA" id="YCRAAQH"/>
<dbReference type="OrthoDB" id="5590282at2759"/>
<dbReference type="GO" id="GO:0016538">
    <property type="term" value="F:cyclin-dependent protein serine/threonine kinase regulator activity"/>
    <property type="evidence" value="ECO:0007669"/>
    <property type="project" value="InterPro"/>
</dbReference>
<dbReference type="GO" id="GO:0051301">
    <property type="term" value="P:cell division"/>
    <property type="evidence" value="ECO:0007669"/>
    <property type="project" value="UniProtKB-KW"/>
</dbReference>
<dbReference type="GO" id="GO:0044772">
    <property type="term" value="P:mitotic cell cycle phase transition"/>
    <property type="evidence" value="ECO:0007669"/>
    <property type="project" value="InterPro"/>
</dbReference>
<dbReference type="CDD" id="cd20504">
    <property type="entry name" value="CYCLIN_CCNA_rpt1"/>
    <property type="match status" value="1"/>
</dbReference>
<dbReference type="CDD" id="cd20505">
    <property type="entry name" value="CYCLIN_CCNA_rpt2"/>
    <property type="match status" value="1"/>
</dbReference>
<dbReference type="FunFam" id="1.10.472.10:FF:000001">
    <property type="entry name" value="G2/mitotic-specific cyclin"/>
    <property type="match status" value="1"/>
</dbReference>
<dbReference type="Gene3D" id="1.10.472.10">
    <property type="entry name" value="Cyclin-like"/>
    <property type="match status" value="2"/>
</dbReference>
<dbReference type="InterPro" id="IPR039361">
    <property type="entry name" value="Cyclin"/>
</dbReference>
<dbReference type="InterPro" id="IPR032447">
    <property type="entry name" value="Cyclin-A_N"/>
</dbReference>
<dbReference type="InterPro" id="IPR013763">
    <property type="entry name" value="Cyclin-like_dom"/>
</dbReference>
<dbReference type="InterPro" id="IPR036915">
    <property type="entry name" value="Cyclin-like_sf"/>
</dbReference>
<dbReference type="InterPro" id="IPR046965">
    <property type="entry name" value="Cyclin_A/B-like"/>
</dbReference>
<dbReference type="InterPro" id="IPR004367">
    <property type="entry name" value="Cyclin_C-dom"/>
</dbReference>
<dbReference type="InterPro" id="IPR006671">
    <property type="entry name" value="Cyclin_N"/>
</dbReference>
<dbReference type="InterPro" id="IPR048258">
    <property type="entry name" value="Cyclins_cyclin-box"/>
</dbReference>
<dbReference type="PANTHER" id="PTHR10177">
    <property type="entry name" value="CYCLINS"/>
    <property type="match status" value="1"/>
</dbReference>
<dbReference type="Pfam" id="PF02984">
    <property type="entry name" value="Cyclin_C"/>
    <property type="match status" value="1"/>
</dbReference>
<dbReference type="Pfam" id="PF00134">
    <property type="entry name" value="Cyclin_N"/>
    <property type="match status" value="1"/>
</dbReference>
<dbReference type="Pfam" id="PF16500">
    <property type="entry name" value="Cyclin_N2"/>
    <property type="match status" value="1"/>
</dbReference>
<dbReference type="PIRSF" id="PIRSF001771">
    <property type="entry name" value="Cyclin_A_B_D_E"/>
    <property type="match status" value="1"/>
</dbReference>
<dbReference type="SMART" id="SM00385">
    <property type="entry name" value="CYCLIN"/>
    <property type="match status" value="2"/>
</dbReference>
<dbReference type="SMART" id="SM01332">
    <property type="entry name" value="Cyclin_C"/>
    <property type="match status" value="1"/>
</dbReference>
<dbReference type="SUPFAM" id="SSF47954">
    <property type="entry name" value="Cyclin-like"/>
    <property type="match status" value="2"/>
</dbReference>
<dbReference type="PROSITE" id="PS00292">
    <property type="entry name" value="CYCLINS"/>
    <property type="match status" value="1"/>
</dbReference>
<organism>
    <name type="scientific">Patella vulgata</name>
    <name type="common">Common limpet</name>
    <dbReference type="NCBI Taxonomy" id="6465"/>
    <lineage>
        <taxon>Eukaryota</taxon>
        <taxon>Metazoa</taxon>
        <taxon>Spiralia</taxon>
        <taxon>Lophotrochozoa</taxon>
        <taxon>Mollusca</taxon>
        <taxon>Gastropoda</taxon>
        <taxon>Patellogastropoda</taxon>
        <taxon>Patelloidea</taxon>
        <taxon>Patellidae</taxon>
        <taxon>Patella</taxon>
    </lineage>
</organism>
<feature type="chain" id="PRO_0000080346" description="G2/mitotic-specific cyclin-A">
    <location>
        <begin position="1"/>
        <end position="426"/>
    </location>
</feature>
<feature type="region of interest" description="Disordered" evidence="1">
    <location>
        <begin position="1"/>
        <end position="22"/>
    </location>
</feature>
<feature type="compositionally biased region" description="Polar residues" evidence="1">
    <location>
        <begin position="1"/>
        <end position="11"/>
    </location>
</feature>
<reference key="1">
    <citation type="journal article" date="1991" name="EMBO J.">
        <title>The role of cyclins in the maturation of Patella vulgata oocytes.</title>
        <authorList>
            <person name="van Loon A.E."/>
            <person name="Colas P."/>
            <person name="Goedemans H.J."/>
            <person name="Neant I."/>
            <person name="Dalbon P."/>
            <person name="Guerrier P."/>
        </authorList>
    </citation>
    <scope>NUCLEOTIDE SEQUENCE [MRNA]</scope>
    <source>
        <tissue>Oocyte</tissue>
    </source>
</reference>
<proteinExistence type="evidence at transcript level"/>
<sequence length="426" mass="48010">MSMVHGSSFQIAQDGENENQGVQRVKKAGLTARGNVAVAKRSALGTITNQNIRVQPSRAAKSGNADCQDENVFAKQKSFGSSNNENKGFKIHVDEPTVQVLTTATLKTTRQSEDEDIKLNDQVTSLPSLQALEDIQVDNENGSPMVLDVTIEDAEKKPIDREAIILSVPEYAEDIYKHLREAESRHRSKPGYMKKQPDITNSMRSILVDWMVEVSEEYKLHRETLFLAINYIDRFLSQMSVLRGKLQLVGAASMFIASKYEEIYPPEVSEFVYITDDTYEQKQVLRMEHLILKVLSFDVAQPTINWFTDTYAKMADTDETTKSLSMYLSELTLVDADPYLKYLPSTIAAASLCLANITLGSEPWPSSLAKESKYEISEFSECLQEMYQTYLNAPNHPQQAIREKYKSSKYQQVSSISPPSSLSFTM</sequence>
<protein>
    <recommendedName>
        <fullName>G2/mitotic-specific cyclin-A</fullName>
    </recommendedName>
</protein>
<keyword id="KW-0131">Cell cycle</keyword>
<keyword id="KW-0132">Cell division</keyword>
<keyword id="KW-0195">Cyclin</keyword>
<keyword id="KW-0498">Mitosis</keyword>
<evidence type="ECO:0000256" key="1">
    <source>
        <dbReference type="SAM" id="MobiDB-lite"/>
    </source>
</evidence>
<evidence type="ECO:0000305" key="2"/>
<accession>P24861</accession>
<comment type="function">
    <text>Essential for the control of the cell cycle at the G2/M (mitosis) transition. Interacts with the CDC2 and CDK2 protein kinases to form MPF. G2/M cyclins accumulate steadily during G2 and are abruptly destroyed at mitosis.</text>
</comment>
<comment type="similarity">
    <text evidence="2">Belongs to the cyclin family. Cyclin AB subfamily.</text>
</comment>
<name>CCNA_PATVU</name>